<keyword id="KW-0067">ATP-binding</keyword>
<keyword id="KW-0175">Coiled coil</keyword>
<keyword id="KW-0347">Helicase</keyword>
<keyword id="KW-0378">Hydrolase</keyword>
<keyword id="KW-0547">Nucleotide-binding</keyword>
<keyword id="KW-1185">Reference proteome</keyword>
<keyword id="KW-0694">RNA-binding</keyword>
<evidence type="ECO:0000255" key="1"/>
<evidence type="ECO:0000255" key="2">
    <source>
        <dbReference type="PROSITE-ProRule" id="PRU00541"/>
    </source>
</evidence>
<evidence type="ECO:0000255" key="3">
    <source>
        <dbReference type="PROSITE-ProRule" id="PRU00542"/>
    </source>
</evidence>
<evidence type="ECO:0000256" key="4">
    <source>
        <dbReference type="SAM" id="MobiDB-lite"/>
    </source>
</evidence>
<evidence type="ECO:0000305" key="5"/>
<accession>Q0INC5</accession>
<accession>B7ELR4</accession>
<accession>Q2QQW2</accession>
<sequence length="802" mass="89508">MDADFRFDPDGSDDDGAAASAAAGRRKPAQSPWEFSSYAESVAAEHARRRTTSIDEKISQALSGSRRGGKPSIPDGDSEGDEDDSEVEDDSEEDDKEVVEGEIDDEEDEVEESEDDDEGVEVSDEEVEELEEGKGEEKSDEVEEGEEGQDGEEEEKEEGDEEAAEEEEETDKKSGVVDPSKFFASSEGASFHANSFLELNLSRPLLRACEALGYQKPTPIQAACIPLALTGRDICGSAITGSGKTAAFSLPVLERLLFRPKRVPAIRVLILTPTRELAAQVHSMIEKLAQFTDIRCCLIVGGLSTKVQEVALRSMPDIVVATPGRIIDHLRNSLSVGLEDLAILILDEADRLLELGFSAEIQELIRMCPRRRQTMLFSATMTEEINELVTLSLNKPVRLEADPSLKRPATLTEEVVRIRRAREANQEAVLLALCLKTFKDKVIIFSGTKHSAHRLKIIFGLSGMKAAELHGNLTQAQRLEALELFKKQEVDFLIATDVAARGIDIVGVRTVINFSCPRDARTYLHRVGRTARAGREGYAVTFVTDDDRSLLKAIAKKAGSQLKSRIVAEKPVAECAKLIEELEDQISTIIQEEREERILRKAEMEATKAENMIAHKDEIYSRPKRTWFATEKEKKLLAKAAKESTSQGKSNSGVISAQQAEDLRLKEKKRREREKNLPRKKRRRLEAEREMLEDESEDEEEAKESKGGKKEKKGQSLVDVAYRRAKSMKASGKRGAGTGKGKNDKKAKQHSGKGPTRQEEMQELFQNDMSEWKQGRSLKKNNVMRKKSKNSFKSKSRYNRRK</sequence>
<name>RH28_ORYSJ</name>
<feature type="chain" id="PRO_0000282488" description="DEAD-box ATP-dependent RNA helicase 28">
    <location>
        <begin position="1"/>
        <end position="802"/>
    </location>
</feature>
<feature type="domain" description="Helicase ATP-binding" evidence="2">
    <location>
        <begin position="225"/>
        <end position="399"/>
    </location>
</feature>
<feature type="domain" description="Helicase C-terminal" evidence="3">
    <location>
        <begin position="429"/>
        <end position="573"/>
    </location>
</feature>
<feature type="region of interest" description="Disordered" evidence="4">
    <location>
        <begin position="1"/>
        <end position="179"/>
    </location>
</feature>
<feature type="region of interest" description="Disordered" evidence="4">
    <location>
        <begin position="639"/>
        <end position="802"/>
    </location>
</feature>
<feature type="coiled-coil region" evidence="1">
    <location>
        <begin position="90"/>
        <end position="122"/>
    </location>
</feature>
<feature type="coiled-coil region" evidence="1">
    <location>
        <begin position="149"/>
        <end position="174"/>
    </location>
</feature>
<feature type="coiled-coil region" evidence="1">
    <location>
        <begin position="572"/>
        <end position="616"/>
    </location>
</feature>
<feature type="coiled-coil region" evidence="1">
    <location>
        <begin position="671"/>
        <end position="712"/>
    </location>
</feature>
<feature type="short sequence motif" description="Q motif">
    <location>
        <begin position="194"/>
        <end position="222"/>
    </location>
</feature>
<feature type="short sequence motif" description="DEAD box">
    <location>
        <begin position="347"/>
        <end position="350"/>
    </location>
</feature>
<feature type="compositionally biased region" description="Acidic residues" evidence="4">
    <location>
        <begin position="76"/>
        <end position="131"/>
    </location>
</feature>
<feature type="compositionally biased region" description="Acidic residues" evidence="4">
    <location>
        <begin position="138"/>
        <end position="169"/>
    </location>
</feature>
<feature type="compositionally biased region" description="Polar residues" evidence="4">
    <location>
        <begin position="644"/>
        <end position="659"/>
    </location>
</feature>
<feature type="compositionally biased region" description="Basic residues" evidence="4">
    <location>
        <begin position="666"/>
        <end position="684"/>
    </location>
</feature>
<feature type="compositionally biased region" description="Acidic residues" evidence="4">
    <location>
        <begin position="691"/>
        <end position="702"/>
    </location>
</feature>
<feature type="compositionally biased region" description="Basic residues" evidence="4">
    <location>
        <begin position="776"/>
        <end position="802"/>
    </location>
</feature>
<feature type="binding site" evidence="2">
    <location>
        <begin position="238"/>
        <end position="245"/>
    </location>
    <ligand>
        <name>ATP</name>
        <dbReference type="ChEBI" id="CHEBI:30616"/>
    </ligand>
</feature>
<organism>
    <name type="scientific">Oryza sativa subsp. japonica</name>
    <name type="common">Rice</name>
    <dbReference type="NCBI Taxonomy" id="39947"/>
    <lineage>
        <taxon>Eukaryota</taxon>
        <taxon>Viridiplantae</taxon>
        <taxon>Streptophyta</taxon>
        <taxon>Embryophyta</taxon>
        <taxon>Tracheophyta</taxon>
        <taxon>Spermatophyta</taxon>
        <taxon>Magnoliopsida</taxon>
        <taxon>Liliopsida</taxon>
        <taxon>Poales</taxon>
        <taxon>Poaceae</taxon>
        <taxon>BOP clade</taxon>
        <taxon>Oryzoideae</taxon>
        <taxon>Oryzeae</taxon>
        <taxon>Oryzinae</taxon>
        <taxon>Oryza</taxon>
        <taxon>Oryza sativa</taxon>
    </lineage>
</organism>
<dbReference type="EC" id="3.6.4.13"/>
<dbReference type="EMBL" id="DP000011">
    <property type="protein sequence ID" value="ABA98487.1"/>
    <property type="molecule type" value="Genomic_DNA"/>
</dbReference>
<dbReference type="EMBL" id="AP008218">
    <property type="protein sequence ID" value="BAF29790.1"/>
    <property type="status" value="ALT_INIT"/>
    <property type="molecule type" value="Genomic_DNA"/>
</dbReference>
<dbReference type="EMBL" id="AP014968">
    <property type="protein sequence ID" value="BAT17143.1"/>
    <property type="molecule type" value="Genomic_DNA"/>
</dbReference>
<dbReference type="EMBL" id="CM000149">
    <property type="protein sequence ID" value="EAZ20482.1"/>
    <property type="molecule type" value="Genomic_DNA"/>
</dbReference>
<dbReference type="EMBL" id="AK073151">
    <property type="protein sequence ID" value="BAG93311.1"/>
    <property type="molecule type" value="mRNA"/>
</dbReference>
<dbReference type="RefSeq" id="XP_015620340.1">
    <property type="nucleotide sequence ID" value="XM_015764854.1"/>
</dbReference>
<dbReference type="SMR" id="Q0INC5"/>
<dbReference type="FunCoup" id="Q0INC5">
    <property type="interactions" value="1925"/>
</dbReference>
<dbReference type="STRING" id="39947.Q0INC5"/>
<dbReference type="PaxDb" id="39947-Q0INC5"/>
<dbReference type="EnsemblPlants" id="Os12t0481100-01">
    <property type="protein sequence ID" value="Os12t0481100-01"/>
    <property type="gene ID" value="Os12g0481100"/>
</dbReference>
<dbReference type="Gramene" id="Os12t0481100-01">
    <property type="protein sequence ID" value="Os12t0481100-01"/>
    <property type="gene ID" value="Os12g0481100"/>
</dbReference>
<dbReference type="KEGG" id="dosa:Os12g0481100"/>
<dbReference type="eggNOG" id="KOG0338">
    <property type="taxonomic scope" value="Eukaryota"/>
</dbReference>
<dbReference type="HOGENOM" id="CLU_003041_3_3_1"/>
<dbReference type="InParanoid" id="Q0INC5"/>
<dbReference type="OMA" id="MIDPPKQ"/>
<dbReference type="OrthoDB" id="10259843at2759"/>
<dbReference type="Proteomes" id="UP000000763">
    <property type="component" value="Chromosome 12"/>
</dbReference>
<dbReference type="Proteomes" id="UP000007752">
    <property type="component" value="Chromosome 12"/>
</dbReference>
<dbReference type="Proteomes" id="UP000059680">
    <property type="component" value="Chromosome 12"/>
</dbReference>
<dbReference type="GO" id="GO:0005730">
    <property type="term" value="C:nucleolus"/>
    <property type="evidence" value="ECO:0000318"/>
    <property type="project" value="GO_Central"/>
</dbReference>
<dbReference type="GO" id="GO:0005524">
    <property type="term" value="F:ATP binding"/>
    <property type="evidence" value="ECO:0007669"/>
    <property type="project" value="UniProtKB-KW"/>
</dbReference>
<dbReference type="GO" id="GO:0016887">
    <property type="term" value="F:ATP hydrolysis activity"/>
    <property type="evidence" value="ECO:0007669"/>
    <property type="project" value="RHEA"/>
</dbReference>
<dbReference type="GO" id="GO:0003723">
    <property type="term" value="F:RNA binding"/>
    <property type="evidence" value="ECO:0007669"/>
    <property type="project" value="UniProtKB-KW"/>
</dbReference>
<dbReference type="GO" id="GO:0003724">
    <property type="term" value="F:RNA helicase activity"/>
    <property type="evidence" value="ECO:0007669"/>
    <property type="project" value="UniProtKB-EC"/>
</dbReference>
<dbReference type="CDD" id="cd17947">
    <property type="entry name" value="DEADc_DDX27"/>
    <property type="match status" value="1"/>
</dbReference>
<dbReference type="CDD" id="cd18787">
    <property type="entry name" value="SF2_C_DEAD"/>
    <property type="match status" value="1"/>
</dbReference>
<dbReference type="Gene3D" id="3.40.50.300">
    <property type="entry name" value="P-loop containing nucleotide triphosphate hydrolases"/>
    <property type="match status" value="2"/>
</dbReference>
<dbReference type="InterPro" id="IPR011545">
    <property type="entry name" value="DEAD/DEAH_box_helicase_dom"/>
</dbReference>
<dbReference type="InterPro" id="IPR050079">
    <property type="entry name" value="DEAD_box_RNA_helicase"/>
</dbReference>
<dbReference type="InterPro" id="IPR014001">
    <property type="entry name" value="Helicase_ATP-bd"/>
</dbReference>
<dbReference type="InterPro" id="IPR001650">
    <property type="entry name" value="Helicase_C-like"/>
</dbReference>
<dbReference type="InterPro" id="IPR027417">
    <property type="entry name" value="P-loop_NTPase"/>
</dbReference>
<dbReference type="InterPro" id="IPR000629">
    <property type="entry name" value="RNA-helicase_DEAD-box_CS"/>
</dbReference>
<dbReference type="InterPro" id="IPR014014">
    <property type="entry name" value="RNA_helicase_DEAD_Q_motif"/>
</dbReference>
<dbReference type="PANTHER" id="PTHR47959">
    <property type="entry name" value="ATP-DEPENDENT RNA HELICASE RHLE-RELATED"/>
    <property type="match status" value="1"/>
</dbReference>
<dbReference type="PANTHER" id="PTHR47959:SF14">
    <property type="entry name" value="DEAD-BOX ATP-DEPENDENT RNA HELICASE 28"/>
    <property type="match status" value="1"/>
</dbReference>
<dbReference type="Pfam" id="PF00270">
    <property type="entry name" value="DEAD"/>
    <property type="match status" value="1"/>
</dbReference>
<dbReference type="Pfam" id="PF00271">
    <property type="entry name" value="Helicase_C"/>
    <property type="match status" value="1"/>
</dbReference>
<dbReference type="SMART" id="SM00487">
    <property type="entry name" value="DEXDc"/>
    <property type="match status" value="1"/>
</dbReference>
<dbReference type="SMART" id="SM00490">
    <property type="entry name" value="HELICc"/>
    <property type="match status" value="1"/>
</dbReference>
<dbReference type="SUPFAM" id="SSF52540">
    <property type="entry name" value="P-loop containing nucleoside triphosphate hydrolases"/>
    <property type="match status" value="2"/>
</dbReference>
<dbReference type="PROSITE" id="PS00039">
    <property type="entry name" value="DEAD_ATP_HELICASE"/>
    <property type="match status" value="1"/>
</dbReference>
<dbReference type="PROSITE" id="PS51192">
    <property type="entry name" value="HELICASE_ATP_BIND_1"/>
    <property type="match status" value="1"/>
</dbReference>
<dbReference type="PROSITE" id="PS51194">
    <property type="entry name" value="HELICASE_CTER"/>
    <property type="match status" value="1"/>
</dbReference>
<dbReference type="PROSITE" id="PS51195">
    <property type="entry name" value="Q_MOTIF"/>
    <property type="match status" value="1"/>
</dbReference>
<comment type="catalytic activity">
    <reaction>
        <text>ATP + H2O = ADP + phosphate + H(+)</text>
        <dbReference type="Rhea" id="RHEA:13065"/>
        <dbReference type="ChEBI" id="CHEBI:15377"/>
        <dbReference type="ChEBI" id="CHEBI:15378"/>
        <dbReference type="ChEBI" id="CHEBI:30616"/>
        <dbReference type="ChEBI" id="CHEBI:43474"/>
        <dbReference type="ChEBI" id="CHEBI:456216"/>
        <dbReference type="EC" id="3.6.4.13"/>
    </reaction>
</comment>
<comment type="domain">
    <text>The Q motif is unique to and characteristic of the DEAD box family of RNA helicases and controls ATP binding and hydrolysis.</text>
</comment>
<comment type="similarity">
    <text evidence="5">Belongs to the DEAD box helicase family. DDX27/DRS1 subfamily.</text>
</comment>
<comment type="sequence caution" evidence="5">
    <conflict type="erroneous initiation">
        <sequence resource="EMBL-CDS" id="BAF29790"/>
    </conflict>
</comment>
<gene>
    <name type="ordered locus">Os12g0481100</name>
    <name type="ordered locus">LOC_Os12g29660</name>
    <name type="ORF">OsJ_36091</name>
</gene>
<protein>
    <recommendedName>
        <fullName>DEAD-box ATP-dependent RNA helicase 28</fullName>
        <ecNumber>3.6.4.13</ecNumber>
    </recommendedName>
</protein>
<proteinExistence type="evidence at transcript level"/>
<reference key="1">
    <citation type="journal article" date="2005" name="BMC Biol.">
        <title>The sequence of rice chromosomes 11 and 12, rich in disease resistance genes and recent gene duplications.</title>
        <authorList>
            <consortium name="The rice chromosomes 11 and 12 sequencing consortia"/>
        </authorList>
    </citation>
    <scope>NUCLEOTIDE SEQUENCE [LARGE SCALE GENOMIC DNA]</scope>
    <source>
        <strain>cv. Nipponbare</strain>
    </source>
</reference>
<reference key="2">
    <citation type="journal article" date="2005" name="Nature">
        <title>The map-based sequence of the rice genome.</title>
        <authorList>
            <consortium name="International rice genome sequencing project (IRGSP)"/>
        </authorList>
    </citation>
    <scope>NUCLEOTIDE SEQUENCE [LARGE SCALE GENOMIC DNA]</scope>
    <source>
        <strain>cv. Nipponbare</strain>
    </source>
</reference>
<reference key="3">
    <citation type="journal article" date="2008" name="Nucleic Acids Res.">
        <title>The rice annotation project database (RAP-DB): 2008 update.</title>
        <authorList>
            <consortium name="The rice annotation project (RAP)"/>
        </authorList>
    </citation>
    <scope>GENOME REANNOTATION</scope>
    <source>
        <strain>cv. Nipponbare</strain>
    </source>
</reference>
<reference key="4">
    <citation type="journal article" date="2013" name="Rice">
        <title>Improvement of the Oryza sativa Nipponbare reference genome using next generation sequence and optical map data.</title>
        <authorList>
            <person name="Kawahara Y."/>
            <person name="de la Bastide M."/>
            <person name="Hamilton J.P."/>
            <person name="Kanamori H."/>
            <person name="McCombie W.R."/>
            <person name="Ouyang S."/>
            <person name="Schwartz D.C."/>
            <person name="Tanaka T."/>
            <person name="Wu J."/>
            <person name="Zhou S."/>
            <person name="Childs K.L."/>
            <person name="Davidson R.M."/>
            <person name="Lin H."/>
            <person name="Quesada-Ocampo L."/>
            <person name="Vaillancourt B."/>
            <person name="Sakai H."/>
            <person name="Lee S.S."/>
            <person name="Kim J."/>
            <person name="Numa H."/>
            <person name="Itoh T."/>
            <person name="Buell C.R."/>
            <person name="Matsumoto T."/>
        </authorList>
    </citation>
    <scope>GENOME REANNOTATION</scope>
    <source>
        <strain>cv. Nipponbare</strain>
    </source>
</reference>
<reference key="5">
    <citation type="journal article" date="2005" name="PLoS Biol.">
        <title>The genomes of Oryza sativa: a history of duplications.</title>
        <authorList>
            <person name="Yu J."/>
            <person name="Wang J."/>
            <person name="Lin W."/>
            <person name="Li S."/>
            <person name="Li H."/>
            <person name="Zhou J."/>
            <person name="Ni P."/>
            <person name="Dong W."/>
            <person name="Hu S."/>
            <person name="Zeng C."/>
            <person name="Zhang J."/>
            <person name="Zhang Y."/>
            <person name="Li R."/>
            <person name="Xu Z."/>
            <person name="Li S."/>
            <person name="Li X."/>
            <person name="Zheng H."/>
            <person name="Cong L."/>
            <person name="Lin L."/>
            <person name="Yin J."/>
            <person name="Geng J."/>
            <person name="Li G."/>
            <person name="Shi J."/>
            <person name="Liu J."/>
            <person name="Lv H."/>
            <person name="Li J."/>
            <person name="Wang J."/>
            <person name="Deng Y."/>
            <person name="Ran L."/>
            <person name="Shi X."/>
            <person name="Wang X."/>
            <person name="Wu Q."/>
            <person name="Li C."/>
            <person name="Ren X."/>
            <person name="Wang J."/>
            <person name="Wang X."/>
            <person name="Li D."/>
            <person name="Liu D."/>
            <person name="Zhang X."/>
            <person name="Ji Z."/>
            <person name="Zhao W."/>
            <person name="Sun Y."/>
            <person name="Zhang Z."/>
            <person name="Bao J."/>
            <person name="Han Y."/>
            <person name="Dong L."/>
            <person name="Ji J."/>
            <person name="Chen P."/>
            <person name="Wu S."/>
            <person name="Liu J."/>
            <person name="Xiao Y."/>
            <person name="Bu D."/>
            <person name="Tan J."/>
            <person name="Yang L."/>
            <person name="Ye C."/>
            <person name="Zhang J."/>
            <person name="Xu J."/>
            <person name="Zhou Y."/>
            <person name="Yu Y."/>
            <person name="Zhang B."/>
            <person name="Zhuang S."/>
            <person name="Wei H."/>
            <person name="Liu B."/>
            <person name="Lei M."/>
            <person name="Yu H."/>
            <person name="Li Y."/>
            <person name="Xu H."/>
            <person name="Wei S."/>
            <person name="He X."/>
            <person name="Fang L."/>
            <person name="Zhang Z."/>
            <person name="Zhang Y."/>
            <person name="Huang X."/>
            <person name="Su Z."/>
            <person name="Tong W."/>
            <person name="Li J."/>
            <person name="Tong Z."/>
            <person name="Li S."/>
            <person name="Ye J."/>
            <person name="Wang L."/>
            <person name="Fang L."/>
            <person name="Lei T."/>
            <person name="Chen C.-S."/>
            <person name="Chen H.-C."/>
            <person name="Xu Z."/>
            <person name="Li H."/>
            <person name="Huang H."/>
            <person name="Zhang F."/>
            <person name="Xu H."/>
            <person name="Li N."/>
            <person name="Zhao C."/>
            <person name="Li S."/>
            <person name="Dong L."/>
            <person name="Huang Y."/>
            <person name="Li L."/>
            <person name="Xi Y."/>
            <person name="Qi Q."/>
            <person name="Li W."/>
            <person name="Zhang B."/>
            <person name="Hu W."/>
            <person name="Zhang Y."/>
            <person name="Tian X."/>
            <person name="Jiao Y."/>
            <person name="Liang X."/>
            <person name="Jin J."/>
            <person name="Gao L."/>
            <person name="Zheng W."/>
            <person name="Hao B."/>
            <person name="Liu S.-M."/>
            <person name="Wang W."/>
            <person name="Yuan L."/>
            <person name="Cao M."/>
            <person name="McDermott J."/>
            <person name="Samudrala R."/>
            <person name="Wang J."/>
            <person name="Wong G.K.-S."/>
            <person name="Yang H."/>
        </authorList>
    </citation>
    <scope>NUCLEOTIDE SEQUENCE [LARGE SCALE GENOMIC DNA]</scope>
    <source>
        <strain>cv. Nipponbare</strain>
    </source>
</reference>
<reference key="6">
    <citation type="journal article" date="2003" name="Science">
        <title>Collection, mapping, and annotation of over 28,000 cDNA clones from japonica rice.</title>
        <authorList>
            <consortium name="The rice full-length cDNA consortium"/>
        </authorList>
    </citation>
    <scope>NUCLEOTIDE SEQUENCE [LARGE SCALE MRNA]</scope>
    <source>
        <strain>cv. Nipponbare</strain>
    </source>
</reference>